<feature type="chain" id="PRO_0000079518" description="Small integral membrane protein 11">
    <location>
        <begin position="1"/>
        <end position="55"/>
    </location>
</feature>
<feature type="transmembrane region" description="Helical" evidence="2">
    <location>
        <begin position="9"/>
        <end position="29"/>
    </location>
</feature>
<feature type="coiled-coil region" evidence="2">
    <location>
        <begin position="34"/>
        <end position="54"/>
    </location>
</feature>
<sequence>MNWKVLEHVPLLLYILAAKTLILCLAFAGVKMYQRRSLEGKLQAEKRKQSEKKAS</sequence>
<accession>Q99J19</accession>
<reference key="1">
    <citation type="journal article" date="2001" name="Genomics">
        <title>From PREDs and open reading frames to cDNA isolation: revisiting the human chromosome 21 transcription map.</title>
        <authorList>
            <person name="Reymond A."/>
            <person name="Friedli M."/>
            <person name="Neergaard Henrichsen C."/>
            <person name="Chapot F."/>
            <person name="Deutsch S."/>
            <person name="Ucla C."/>
            <person name="Rossier C."/>
            <person name="Lyle R."/>
            <person name="Guipponi M."/>
            <person name="Antonarakis S.E."/>
        </authorList>
    </citation>
    <scope>NUCLEOTIDE SEQUENCE [MRNA]</scope>
    <source>
        <tissue>Mammary gland</tissue>
    </source>
</reference>
<reference key="2">
    <citation type="journal article" date="2005" name="Science">
        <title>The transcriptional landscape of the mammalian genome.</title>
        <authorList>
            <person name="Carninci P."/>
            <person name="Kasukawa T."/>
            <person name="Katayama S."/>
            <person name="Gough J."/>
            <person name="Frith M.C."/>
            <person name="Maeda N."/>
            <person name="Oyama R."/>
            <person name="Ravasi T."/>
            <person name="Lenhard B."/>
            <person name="Wells C."/>
            <person name="Kodzius R."/>
            <person name="Shimokawa K."/>
            <person name="Bajic V.B."/>
            <person name="Brenner S.E."/>
            <person name="Batalov S."/>
            <person name="Forrest A.R."/>
            <person name="Zavolan M."/>
            <person name="Davis M.J."/>
            <person name="Wilming L.G."/>
            <person name="Aidinis V."/>
            <person name="Allen J.E."/>
            <person name="Ambesi-Impiombato A."/>
            <person name="Apweiler R."/>
            <person name="Aturaliya R.N."/>
            <person name="Bailey T.L."/>
            <person name="Bansal M."/>
            <person name="Baxter L."/>
            <person name="Beisel K.W."/>
            <person name="Bersano T."/>
            <person name="Bono H."/>
            <person name="Chalk A.M."/>
            <person name="Chiu K.P."/>
            <person name="Choudhary V."/>
            <person name="Christoffels A."/>
            <person name="Clutterbuck D.R."/>
            <person name="Crowe M.L."/>
            <person name="Dalla E."/>
            <person name="Dalrymple B.P."/>
            <person name="de Bono B."/>
            <person name="Della Gatta G."/>
            <person name="di Bernardo D."/>
            <person name="Down T."/>
            <person name="Engstrom P."/>
            <person name="Fagiolini M."/>
            <person name="Faulkner G."/>
            <person name="Fletcher C.F."/>
            <person name="Fukushima T."/>
            <person name="Furuno M."/>
            <person name="Futaki S."/>
            <person name="Gariboldi M."/>
            <person name="Georgii-Hemming P."/>
            <person name="Gingeras T.R."/>
            <person name="Gojobori T."/>
            <person name="Green R.E."/>
            <person name="Gustincich S."/>
            <person name="Harbers M."/>
            <person name="Hayashi Y."/>
            <person name="Hensch T.K."/>
            <person name="Hirokawa N."/>
            <person name="Hill D."/>
            <person name="Huminiecki L."/>
            <person name="Iacono M."/>
            <person name="Ikeo K."/>
            <person name="Iwama A."/>
            <person name="Ishikawa T."/>
            <person name="Jakt M."/>
            <person name="Kanapin A."/>
            <person name="Katoh M."/>
            <person name="Kawasawa Y."/>
            <person name="Kelso J."/>
            <person name="Kitamura H."/>
            <person name="Kitano H."/>
            <person name="Kollias G."/>
            <person name="Krishnan S.P."/>
            <person name="Kruger A."/>
            <person name="Kummerfeld S.K."/>
            <person name="Kurochkin I.V."/>
            <person name="Lareau L.F."/>
            <person name="Lazarevic D."/>
            <person name="Lipovich L."/>
            <person name="Liu J."/>
            <person name="Liuni S."/>
            <person name="McWilliam S."/>
            <person name="Madan Babu M."/>
            <person name="Madera M."/>
            <person name="Marchionni L."/>
            <person name="Matsuda H."/>
            <person name="Matsuzawa S."/>
            <person name="Miki H."/>
            <person name="Mignone F."/>
            <person name="Miyake S."/>
            <person name="Morris K."/>
            <person name="Mottagui-Tabar S."/>
            <person name="Mulder N."/>
            <person name="Nakano N."/>
            <person name="Nakauchi H."/>
            <person name="Ng P."/>
            <person name="Nilsson R."/>
            <person name="Nishiguchi S."/>
            <person name="Nishikawa S."/>
            <person name="Nori F."/>
            <person name="Ohara O."/>
            <person name="Okazaki Y."/>
            <person name="Orlando V."/>
            <person name="Pang K.C."/>
            <person name="Pavan W.J."/>
            <person name="Pavesi G."/>
            <person name="Pesole G."/>
            <person name="Petrovsky N."/>
            <person name="Piazza S."/>
            <person name="Reed J."/>
            <person name="Reid J.F."/>
            <person name="Ring B.Z."/>
            <person name="Ringwald M."/>
            <person name="Rost B."/>
            <person name="Ruan Y."/>
            <person name="Salzberg S.L."/>
            <person name="Sandelin A."/>
            <person name="Schneider C."/>
            <person name="Schoenbach C."/>
            <person name="Sekiguchi K."/>
            <person name="Semple C.A."/>
            <person name="Seno S."/>
            <person name="Sessa L."/>
            <person name="Sheng Y."/>
            <person name="Shibata Y."/>
            <person name="Shimada H."/>
            <person name="Shimada K."/>
            <person name="Silva D."/>
            <person name="Sinclair B."/>
            <person name="Sperling S."/>
            <person name="Stupka E."/>
            <person name="Sugiura K."/>
            <person name="Sultana R."/>
            <person name="Takenaka Y."/>
            <person name="Taki K."/>
            <person name="Tammoja K."/>
            <person name="Tan S.L."/>
            <person name="Tang S."/>
            <person name="Taylor M.S."/>
            <person name="Tegner J."/>
            <person name="Teichmann S.A."/>
            <person name="Ueda H.R."/>
            <person name="van Nimwegen E."/>
            <person name="Verardo R."/>
            <person name="Wei C.L."/>
            <person name="Yagi K."/>
            <person name="Yamanishi H."/>
            <person name="Zabarovsky E."/>
            <person name="Zhu S."/>
            <person name="Zimmer A."/>
            <person name="Hide W."/>
            <person name="Bult C."/>
            <person name="Grimmond S.M."/>
            <person name="Teasdale R.D."/>
            <person name="Liu E.T."/>
            <person name="Brusic V."/>
            <person name="Quackenbush J."/>
            <person name="Wahlestedt C."/>
            <person name="Mattick J.S."/>
            <person name="Hume D.A."/>
            <person name="Kai C."/>
            <person name="Sasaki D."/>
            <person name="Tomaru Y."/>
            <person name="Fukuda S."/>
            <person name="Kanamori-Katayama M."/>
            <person name="Suzuki M."/>
            <person name="Aoki J."/>
            <person name="Arakawa T."/>
            <person name="Iida J."/>
            <person name="Imamura K."/>
            <person name="Itoh M."/>
            <person name="Kato T."/>
            <person name="Kawaji H."/>
            <person name="Kawagashira N."/>
            <person name="Kawashima T."/>
            <person name="Kojima M."/>
            <person name="Kondo S."/>
            <person name="Konno H."/>
            <person name="Nakano K."/>
            <person name="Ninomiya N."/>
            <person name="Nishio T."/>
            <person name="Okada M."/>
            <person name="Plessy C."/>
            <person name="Shibata K."/>
            <person name="Shiraki T."/>
            <person name="Suzuki S."/>
            <person name="Tagami M."/>
            <person name="Waki K."/>
            <person name="Watahiki A."/>
            <person name="Okamura-Oho Y."/>
            <person name="Suzuki H."/>
            <person name="Kawai J."/>
            <person name="Hayashizaki Y."/>
        </authorList>
    </citation>
    <scope>NUCLEOTIDE SEQUENCE [LARGE SCALE MRNA]</scope>
    <source>
        <strain>C57BL/6J</strain>
    </source>
</reference>
<reference key="3">
    <citation type="journal article" date="2004" name="Genome Res.">
        <title>The status, quality, and expansion of the NIH full-length cDNA project: the Mammalian Gene Collection (MGC).</title>
        <authorList>
            <consortium name="The MGC Project Team"/>
        </authorList>
    </citation>
    <scope>NUCLEOTIDE SEQUENCE [LARGE SCALE MRNA]</scope>
</reference>
<reference key="4">
    <citation type="journal article" date="2010" name="Cell">
        <title>A tissue-specific atlas of mouse protein phosphorylation and expression.</title>
        <authorList>
            <person name="Huttlin E.L."/>
            <person name="Jedrychowski M.P."/>
            <person name="Elias J.E."/>
            <person name="Goswami T."/>
            <person name="Rad R."/>
            <person name="Beausoleil S.A."/>
            <person name="Villen J."/>
            <person name="Haas W."/>
            <person name="Sowa M.E."/>
            <person name="Gygi S.P."/>
        </authorList>
    </citation>
    <scope>IDENTIFICATION BY MASS SPECTROMETRY [LARGE SCALE ANALYSIS]</scope>
    <source>
        <tissue>Brain</tissue>
        <tissue>Pancreas</tissue>
        <tissue>Testis</tissue>
    </source>
</reference>
<comment type="subcellular location">
    <subcellularLocation>
        <location evidence="3">Membrane</location>
        <topology evidence="3">Single-pass membrane protein</topology>
    </subcellularLocation>
</comment>
<comment type="tissue specificity">
    <text>Expressed in brain, heart, kidney, thymus, liver, stomach, muscle, lung, testis, ovary, skin and eye.</text>
</comment>
<protein>
    <recommendedName>
        <fullName evidence="1">Small integral membrane protein 11</fullName>
    </recommendedName>
</protein>
<dbReference type="EMBL" id="AY033901">
    <property type="protein sequence ID" value="AAK68719.1"/>
    <property type="molecule type" value="mRNA"/>
</dbReference>
<dbReference type="EMBL" id="AK004538">
    <property type="protein sequence ID" value="BAC25086.1"/>
    <property type="molecule type" value="mRNA"/>
</dbReference>
<dbReference type="EMBL" id="BC005668">
    <property type="protein sequence ID" value="AAH05668.1"/>
    <property type="molecule type" value="mRNA"/>
</dbReference>
<dbReference type="CCDS" id="CCDS37404.1"/>
<dbReference type="RefSeq" id="NP_620082.1">
    <property type="nucleotide sequence ID" value="NM_138743.2"/>
</dbReference>
<dbReference type="RefSeq" id="XP_030105120.1">
    <property type="nucleotide sequence ID" value="XM_030249260.2"/>
</dbReference>
<dbReference type="SMR" id="Q99J19"/>
<dbReference type="FunCoup" id="Q99J19">
    <property type="interactions" value="4"/>
</dbReference>
<dbReference type="STRING" id="10090.ENSMUSP00000113086"/>
<dbReference type="iPTMnet" id="Q99J19"/>
<dbReference type="PhosphoSitePlus" id="Q99J19"/>
<dbReference type="jPOST" id="Q99J19"/>
<dbReference type="PaxDb" id="10090-ENSMUSP00000070724"/>
<dbReference type="ProteomicsDB" id="257169"/>
<dbReference type="Pumba" id="Q99J19"/>
<dbReference type="Ensembl" id="ENSMUST00000063641.11">
    <property type="protein sequence ID" value="ENSMUSP00000070724.5"/>
    <property type="gene ID" value="ENSMUSG00000051989.12"/>
</dbReference>
<dbReference type="Ensembl" id="ENSMUST00000118064.2">
    <property type="protein sequence ID" value="ENSMUSP00000113086.2"/>
    <property type="gene ID" value="ENSMUSG00000051989.12"/>
</dbReference>
<dbReference type="GeneID" id="68936"/>
<dbReference type="KEGG" id="mmu:68936"/>
<dbReference type="UCSC" id="uc007zyx.1">
    <property type="organism name" value="mouse"/>
</dbReference>
<dbReference type="AGR" id="MGI:1916186"/>
<dbReference type="CTD" id="54065"/>
<dbReference type="MGI" id="MGI:1916186">
    <property type="gene designation" value="Smim11"/>
</dbReference>
<dbReference type="VEuPathDB" id="HostDB:ENSMUSG00000051989"/>
<dbReference type="eggNOG" id="ENOG502SFJD">
    <property type="taxonomic scope" value="Eukaryota"/>
</dbReference>
<dbReference type="GeneTree" id="ENSGT00640000091610"/>
<dbReference type="HOGENOM" id="CLU_196183_0_0_1"/>
<dbReference type="InParanoid" id="Q99J19"/>
<dbReference type="OMA" id="KMWQRKR"/>
<dbReference type="OrthoDB" id="9905024at2759"/>
<dbReference type="PhylomeDB" id="Q99J19"/>
<dbReference type="TreeFam" id="TF330784"/>
<dbReference type="BioGRID-ORCS" id="68936">
    <property type="hits" value="1 hit in 72 CRISPR screens"/>
</dbReference>
<dbReference type="ChiTaRS" id="Smim11">
    <property type="organism name" value="mouse"/>
</dbReference>
<dbReference type="PRO" id="PR:Q99J19"/>
<dbReference type="Proteomes" id="UP000000589">
    <property type="component" value="Chromosome 16"/>
</dbReference>
<dbReference type="RNAct" id="Q99J19">
    <property type="molecule type" value="protein"/>
</dbReference>
<dbReference type="Bgee" id="ENSMUSG00000051989">
    <property type="expression patterns" value="Expressed in animal zygote and 274 other cell types or tissues"/>
</dbReference>
<dbReference type="GO" id="GO:0016020">
    <property type="term" value="C:membrane"/>
    <property type="evidence" value="ECO:0007669"/>
    <property type="project" value="UniProtKB-SubCell"/>
</dbReference>
<dbReference type="InterPro" id="IPR042125">
    <property type="entry name" value="SMIM11"/>
</dbReference>
<dbReference type="PANTHER" id="PTHR35975:SF1">
    <property type="entry name" value="SMALL INTEGRAL MEMBRANE PROTEIN 11"/>
    <property type="match status" value="1"/>
</dbReference>
<dbReference type="PANTHER" id="PTHR35975">
    <property type="entry name" value="SMALL INTEGRAL MEMBRANE PROTEIN 11A"/>
    <property type="match status" value="1"/>
</dbReference>
<dbReference type="Pfam" id="PF14981">
    <property type="entry name" value="FAM165"/>
    <property type="match status" value="1"/>
</dbReference>
<name>SIM11_MOUSE</name>
<organism>
    <name type="scientific">Mus musculus</name>
    <name type="common">Mouse</name>
    <dbReference type="NCBI Taxonomy" id="10090"/>
    <lineage>
        <taxon>Eukaryota</taxon>
        <taxon>Metazoa</taxon>
        <taxon>Chordata</taxon>
        <taxon>Craniata</taxon>
        <taxon>Vertebrata</taxon>
        <taxon>Euteleostomi</taxon>
        <taxon>Mammalia</taxon>
        <taxon>Eutheria</taxon>
        <taxon>Euarchontoglires</taxon>
        <taxon>Glires</taxon>
        <taxon>Rodentia</taxon>
        <taxon>Myomorpha</taxon>
        <taxon>Muroidea</taxon>
        <taxon>Muridae</taxon>
        <taxon>Murinae</taxon>
        <taxon>Mus</taxon>
        <taxon>Mus</taxon>
    </lineage>
</organism>
<evidence type="ECO:0000250" key="1">
    <source>
        <dbReference type="UniProtKB" id="P58511"/>
    </source>
</evidence>
<evidence type="ECO:0000255" key="2"/>
<evidence type="ECO:0000305" key="3"/>
<evidence type="ECO:0000312" key="4">
    <source>
        <dbReference type="MGI" id="MGI:1916186"/>
    </source>
</evidence>
<gene>
    <name evidence="4" type="primary">Smim11</name>
    <name type="synonym">Fam165b</name>
    <name evidence="1" type="synonym">Smim11a</name>
</gene>
<keyword id="KW-0175">Coiled coil</keyword>
<keyword id="KW-0472">Membrane</keyword>
<keyword id="KW-1185">Reference proteome</keyword>
<keyword id="KW-0812">Transmembrane</keyword>
<keyword id="KW-1133">Transmembrane helix</keyword>
<proteinExistence type="evidence at protein level"/>